<protein>
    <recommendedName>
        <fullName>Proofreading thioesterase EntH</fullName>
        <ecNumber>3.1.2.-</ecNumber>
    </recommendedName>
    <alternativeName>
        <fullName>Enterobactin synthase component H</fullName>
    </alternativeName>
</protein>
<dbReference type="EC" id="3.1.2.-"/>
<dbReference type="EMBL" id="CP000647">
    <property type="protein sequence ID" value="ABR76065.1"/>
    <property type="molecule type" value="Genomic_DNA"/>
</dbReference>
<dbReference type="RefSeq" id="WP_008805589.1">
    <property type="nucleotide sequence ID" value="NC_009648.1"/>
</dbReference>
<dbReference type="SMR" id="A6T644"/>
<dbReference type="STRING" id="272620.KPN_00615"/>
<dbReference type="PaxDb" id="272620-KPN_00615"/>
<dbReference type="EnsemblBacteria" id="ABR76065">
    <property type="protein sequence ID" value="ABR76065"/>
    <property type="gene ID" value="KPN_00615"/>
</dbReference>
<dbReference type="GeneID" id="93274464"/>
<dbReference type="KEGG" id="kpn:KPN_00615"/>
<dbReference type="HOGENOM" id="CLU_089876_13_1_6"/>
<dbReference type="UniPathway" id="UPA00017"/>
<dbReference type="Proteomes" id="UP000000265">
    <property type="component" value="Chromosome"/>
</dbReference>
<dbReference type="GO" id="GO:0005829">
    <property type="term" value="C:cytosol"/>
    <property type="evidence" value="ECO:0007669"/>
    <property type="project" value="TreeGrafter"/>
</dbReference>
<dbReference type="GO" id="GO:0061522">
    <property type="term" value="F:1,4-dihydroxy-2-naphthoyl-CoA thioesterase activity"/>
    <property type="evidence" value="ECO:0007669"/>
    <property type="project" value="TreeGrafter"/>
</dbReference>
<dbReference type="GO" id="GO:0009239">
    <property type="term" value="P:enterobactin biosynthetic process"/>
    <property type="evidence" value="ECO:0007669"/>
    <property type="project" value="UniProtKB-UniRule"/>
</dbReference>
<dbReference type="CDD" id="cd03443">
    <property type="entry name" value="PaaI_thioesterase"/>
    <property type="match status" value="1"/>
</dbReference>
<dbReference type="FunFam" id="3.10.129.10:FF:000002">
    <property type="entry name" value="1,4-dihydroxy-2-naphthoyl-CoA hydrolase"/>
    <property type="match status" value="1"/>
</dbReference>
<dbReference type="Gene3D" id="3.10.129.10">
    <property type="entry name" value="Hotdog Thioesterase"/>
    <property type="match status" value="1"/>
</dbReference>
<dbReference type="InterPro" id="IPR029069">
    <property type="entry name" value="HotDog_dom_sf"/>
</dbReference>
<dbReference type="InterPro" id="IPR003736">
    <property type="entry name" value="PAAI_dom"/>
</dbReference>
<dbReference type="InterPro" id="IPR026576">
    <property type="entry name" value="Thioesterase_EntH"/>
</dbReference>
<dbReference type="InterPro" id="IPR006683">
    <property type="entry name" value="Thioestr_dom"/>
</dbReference>
<dbReference type="NCBIfam" id="NF007607">
    <property type="entry name" value="PRK10254.1"/>
    <property type="match status" value="1"/>
</dbReference>
<dbReference type="NCBIfam" id="TIGR00369">
    <property type="entry name" value="unchar_dom_1"/>
    <property type="match status" value="1"/>
</dbReference>
<dbReference type="PANTHER" id="PTHR43240">
    <property type="entry name" value="1,4-DIHYDROXY-2-NAPHTHOYL-COA THIOESTERASE 1"/>
    <property type="match status" value="1"/>
</dbReference>
<dbReference type="PANTHER" id="PTHR43240:SF9">
    <property type="entry name" value="PROOFREADING THIOESTERASE ENTH"/>
    <property type="match status" value="1"/>
</dbReference>
<dbReference type="Pfam" id="PF03061">
    <property type="entry name" value="4HBT"/>
    <property type="match status" value="1"/>
</dbReference>
<dbReference type="SUPFAM" id="SSF54637">
    <property type="entry name" value="Thioesterase/thiol ester dehydrase-isomerase"/>
    <property type="match status" value="1"/>
</dbReference>
<reference key="1">
    <citation type="submission" date="2006-09" db="EMBL/GenBank/DDBJ databases">
        <authorList>
            <consortium name="The Klebsiella pneumonia Genome Sequencing Project"/>
            <person name="McClelland M."/>
            <person name="Sanderson E.K."/>
            <person name="Spieth J."/>
            <person name="Clifton W.S."/>
            <person name="Latreille P."/>
            <person name="Sabo A."/>
            <person name="Pepin K."/>
            <person name="Bhonagiri V."/>
            <person name="Porwollik S."/>
            <person name="Ali J."/>
            <person name="Wilson R.K."/>
        </authorList>
    </citation>
    <scope>NUCLEOTIDE SEQUENCE [LARGE SCALE GENOMIC DNA]</scope>
    <source>
        <strain>ATCC 700721 / MGH 78578</strain>
    </source>
</reference>
<feature type="chain" id="PRO_0000413870" description="Proofreading thioesterase EntH">
    <location>
        <begin position="1"/>
        <end position="137"/>
    </location>
</feature>
<feature type="active site" description="Nucleophile or proton acceptor" evidence="1">
    <location>
        <position position="63"/>
    </location>
</feature>
<organism>
    <name type="scientific">Klebsiella pneumoniae subsp. pneumoniae (strain ATCC 700721 / MGH 78578)</name>
    <dbReference type="NCBI Taxonomy" id="272620"/>
    <lineage>
        <taxon>Bacteria</taxon>
        <taxon>Pseudomonadati</taxon>
        <taxon>Pseudomonadota</taxon>
        <taxon>Gammaproteobacteria</taxon>
        <taxon>Enterobacterales</taxon>
        <taxon>Enterobacteriaceae</taxon>
        <taxon>Klebsiella/Raoultella group</taxon>
        <taxon>Klebsiella</taxon>
        <taxon>Klebsiella pneumoniae complex</taxon>
    </lineage>
</organism>
<comment type="function">
    <text evidence="1">Required for optimal enterobactin synthesis. Acts as a proofreading enzyme that prevents EntB misacylation by hydrolyzing the thioester bound existing between EntB and wrongly charged molecules (By similarity).</text>
</comment>
<comment type="pathway">
    <text>Siderophore biosynthesis; enterobactin biosynthesis.</text>
</comment>
<comment type="subunit">
    <text evidence="1">Homotetramer. Dimer of dimers. Interacts specifically with the aryl carrier protein (ArCP) domain of EntB.</text>
</comment>
<comment type="subcellular location">
    <subcellularLocation>
        <location evidence="1">Cytoplasm</location>
    </subcellularLocation>
</comment>
<comment type="similarity">
    <text evidence="2">Belongs to the thioesterase PaaI family.</text>
</comment>
<sequence length="137" mass="14799">MAWKRELTLAALNASSENTMVAHLGIIYTRLEAGLLEAEMPVDARTHQPFGLLHGGASAALAETLGSMAGWLMTEEGQCVVGTELNATHHRPVSSGKVRGECRPLHLGRQSQSWEIVVYDEKGRRCCTCRLGTAVLG</sequence>
<name>ENTH_KLEP7</name>
<proteinExistence type="inferred from homology"/>
<keyword id="KW-0963">Cytoplasm</keyword>
<keyword id="KW-0378">Hydrolase</keyword>
<evidence type="ECO:0000250" key="1"/>
<evidence type="ECO:0000305" key="2"/>
<accession>A6T644</accession>
<gene>
    <name type="primary">entH</name>
    <name type="ordered locus">KPN78578_06040</name>
    <name type="ORF">KPN_00615</name>
</gene>